<gene>
    <name evidence="1" type="primary">rimP</name>
    <name type="ordered locus">Mmc1_3730</name>
</gene>
<keyword id="KW-0963">Cytoplasm</keyword>
<keyword id="KW-1185">Reference proteome</keyword>
<keyword id="KW-0690">Ribosome biogenesis</keyword>
<reference key="1">
    <citation type="journal article" date="2009" name="Appl. Environ. Microbiol.">
        <title>Complete genome sequence of the chemolithoautotrophic marine magnetotactic coccus strain MC-1.</title>
        <authorList>
            <person name="Schubbe S."/>
            <person name="Williams T.J."/>
            <person name="Xie G."/>
            <person name="Kiss H.E."/>
            <person name="Brettin T.S."/>
            <person name="Martinez D."/>
            <person name="Ross C.A."/>
            <person name="Schuler D."/>
            <person name="Cox B.L."/>
            <person name="Nealson K.H."/>
            <person name="Bazylinski D.A."/>
        </authorList>
    </citation>
    <scope>NUCLEOTIDE SEQUENCE [LARGE SCALE GENOMIC DNA]</scope>
    <source>
        <strain>ATCC BAA-1437 / JCM 17883 / MC-1</strain>
    </source>
</reference>
<organism>
    <name type="scientific">Magnetococcus marinus (strain ATCC BAA-1437 / JCM 17883 / MC-1)</name>
    <dbReference type="NCBI Taxonomy" id="156889"/>
    <lineage>
        <taxon>Bacteria</taxon>
        <taxon>Pseudomonadati</taxon>
        <taxon>Pseudomonadota</taxon>
        <taxon>Alphaproteobacteria</taxon>
        <taxon>Magnetococcales</taxon>
        <taxon>Magnetococcaceae</taxon>
        <taxon>Magnetococcus</taxon>
    </lineage>
</organism>
<dbReference type="EMBL" id="CP000471">
    <property type="protein sequence ID" value="ABK46215.1"/>
    <property type="molecule type" value="Genomic_DNA"/>
</dbReference>
<dbReference type="SMR" id="A0LE22"/>
<dbReference type="STRING" id="156889.Mmc1_3730"/>
<dbReference type="KEGG" id="mgm:Mmc1_3730"/>
<dbReference type="eggNOG" id="COG0779">
    <property type="taxonomic scope" value="Bacteria"/>
</dbReference>
<dbReference type="HOGENOM" id="CLU_070525_2_2_5"/>
<dbReference type="Proteomes" id="UP000002586">
    <property type="component" value="Chromosome"/>
</dbReference>
<dbReference type="GO" id="GO:0005829">
    <property type="term" value="C:cytosol"/>
    <property type="evidence" value="ECO:0007669"/>
    <property type="project" value="TreeGrafter"/>
</dbReference>
<dbReference type="GO" id="GO:0000028">
    <property type="term" value="P:ribosomal small subunit assembly"/>
    <property type="evidence" value="ECO:0007669"/>
    <property type="project" value="TreeGrafter"/>
</dbReference>
<dbReference type="GO" id="GO:0006412">
    <property type="term" value="P:translation"/>
    <property type="evidence" value="ECO:0007669"/>
    <property type="project" value="TreeGrafter"/>
</dbReference>
<dbReference type="CDD" id="cd01734">
    <property type="entry name" value="YlxS_C"/>
    <property type="match status" value="1"/>
</dbReference>
<dbReference type="FunFam" id="3.30.300.70:FF:000001">
    <property type="entry name" value="Ribosome maturation factor RimP"/>
    <property type="match status" value="1"/>
</dbReference>
<dbReference type="Gene3D" id="2.30.30.180">
    <property type="entry name" value="Ribosome maturation factor RimP, C-terminal domain"/>
    <property type="match status" value="1"/>
</dbReference>
<dbReference type="Gene3D" id="3.30.300.70">
    <property type="entry name" value="RimP-like superfamily, N-terminal"/>
    <property type="match status" value="1"/>
</dbReference>
<dbReference type="HAMAP" id="MF_01077">
    <property type="entry name" value="RimP"/>
    <property type="match status" value="1"/>
</dbReference>
<dbReference type="InterPro" id="IPR003728">
    <property type="entry name" value="Ribosome_maturation_RimP"/>
</dbReference>
<dbReference type="InterPro" id="IPR028998">
    <property type="entry name" value="RimP_C"/>
</dbReference>
<dbReference type="InterPro" id="IPR036847">
    <property type="entry name" value="RimP_C_sf"/>
</dbReference>
<dbReference type="InterPro" id="IPR028989">
    <property type="entry name" value="RimP_N"/>
</dbReference>
<dbReference type="InterPro" id="IPR035956">
    <property type="entry name" value="RimP_N_sf"/>
</dbReference>
<dbReference type="PANTHER" id="PTHR33867">
    <property type="entry name" value="RIBOSOME MATURATION FACTOR RIMP"/>
    <property type="match status" value="1"/>
</dbReference>
<dbReference type="PANTHER" id="PTHR33867:SF1">
    <property type="entry name" value="RIBOSOME MATURATION FACTOR RIMP"/>
    <property type="match status" value="1"/>
</dbReference>
<dbReference type="Pfam" id="PF17384">
    <property type="entry name" value="DUF150_C"/>
    <property type="match status" value="1"/>
</dbReference>
<dbReference type="Pfam" id="PF02576">
    <property type="entry name" value="RimP_N"/>
    <property type="match status" value="1"/>
</dbReference>
<dbReference type="SUPFAM" id="SSF74942">
    <property type="entry name" value="YhbC-like, C-terminal domain"/>
    <property type="match status" value="1"/>
</dbReference>
<dbReference type="SUPFAM" id="SSF75420">
    <property type="entry name" value="YhbC-like, N-terminal domain"/>
    <property type="match status" value="1"/>
</dbReference>
<protein>
    <recommendedName>
        <fullName evidence="1">Ribosome maturation factor RimP</fullName>
    </recommendedName>
</protein>
<evidence type="ECO:0000255" key="1">
    <source>
        <dbReference type="HAMAP-Rule" id="MF_01077"/>
    </source>
</evidence>
<accession>A0LE22</accession>
<comment type="function">
    <text evidence="1">Required for maturation of 30S ribosomal subunits.</text>
</comment>
<comment type="subcellular location">
    <subcellularLocation>
        <location evidence="1">Cytoplasm</location>
    </subcellularLocation>
</comment>
<comment type="similarity">
    <text evidence="1">Belongs to the RimP family.</text>
</comment>
<name>RIMP_MAGMM</name>
<feature type="chain" id="PRO_1000084528" description="Ribosome maturation factor RimP">
    <location>
        <begin position="1"/>
        <end position="185"/>
    </location>
</feature>
<proteinExistence type="inferred from homology"/>
<sequence>MGGLWSMVLPVLSDQKNPNRSPLMSDIAQKVEALAIQAAKTEDCEVVEVIYRREGGVYVVRVAADKLPDDQGQERHISLDECGSISRQISSLLDVHDVIPNAYHLEVSSPGIERPLIKDGDFTRFAGKLVEIRTYQPMDTESGPRKKFRGTLLGLQEAMVVVAEANGEVRIPWEQVAKAHLTFDF</sequence>